<accession>Q8XL95</accession>
<comment type="function">
    <text evidence="1">Covalent carrier of the coenzyme of citrate lyase.</text>
</comment>
<comment type="subunit">
    <text evidence="1">Oligomer with a subunit composition of (alpha,beta,gamma)6.</text>
</comment>
<comment type="subcellular location">
    <subcellularLocation>
        <location evidence="1">Cytoplasm</location>
    </subcellularLocation>
</comment>
<comment type="similarity">
    <text evidence="1">Belongs to the CitD family.</text>
</comment>
<feature type="chain" id="PRO_0000214693" description="Citrate lyase acyl carrier protein">
    <location>
        <begin position="1"/>
        <end position="101"/>
    </location>
</feature>
<feature type="modified residue" description="O-(phosphoribosyl dephospho-coenzyme A)serine" evidence="1">
    <location>
        <position position="14"/>
    </location>
</feature>
<dbReference type="EMBL" id="BA000016">
    <property type="protein sequence ID" value="BAB80853.1"/>
    <property type="molecule type" value="Genomic_DNA"/>
</dbReference>
<dbReference type="RefSeq" id="WP_011010284.1">
    <property type="nucleotide sequence ID" value="NC_003366.1"/>
</dbReference>
<dbReference type="SMR" id="Q8XL95"/>
<dbReference type="STRING" id="195102.gene:10490410"/>
<dbReference type="KEGG" id="cpe:CPE1147"/>
<dbReference type="HOGENOM" id="CLU_158489_0_0_9"/>
<dbReference type="Proteomes" id="UP000000818">
    <property type="component" value="Chromosome"/>
</dbReference>
<dbReference type="GO" id="GO:0005737">
    <property type="term" value="C:cytoplasm"/>
    <property type="evidence" value="ECO:0007669"/>
    <property type="project" value="UniProtKB-SubCell"/>
</dbReference>
<dbReference type="HAMAP" id="MF_00805">
    <property type="entry name" value="CitD"/>
    <property type="match status" value="1"/>
</dbReference>
<dbReference type="InterPro" id="IPR006495">
    <property type="entry name" value="CitD"/>
</dbReference>
<dbReference type="InterPro" id="IPR023439">
    <property type="entry name" value="Mal_deCO2ase/Cit_lyase_ACP"/>
</dbReference>
<dbReference type="NCBIfam" id="TIGR01608">
    <property type="entry name" value="citD"/>
    <property type="match status" value="1"/>
</dbReference>
<dbReference type="NCBIfam" id="NF009726">
    <property type="entry name" value="PRK13253.1"/>
    <property type="match status" value="1"/>
</dbReference>
<dbReference type="Pfam" id="PF06857">
    <property type="entry name" value="ACP"/>
    <property type="match status" value="1"/>
</dbReference>
<dbReference type="PIRSF" id="PIRSF002736">
    <property type="entry name" value="Citrt_lyas_gamma"/>
    <property type="match status" value="1"/>
</dbReference>
<organism>
    <name type="scientific">Clostridium perfringens (strain 13 / Type A)</name>
    <dbReference type="NCBI Taxonomy" id="195102"/>
    <lineage>
        <taxon>Bacteria</taxon>
        <taxon>Bacillati</taxon>
        <taxon>Bacillota</taxon>
        <taxon>Clostridia</taxon>
        <taxon>Eubacteriales</taxon>
        <taxon>Clostridiaceae</taxon>
        <taxon>Clostridium</taxon>
    </lineage>
</organism>
<protein>
    <recommendedName>
        <fullName evidence="1">Citrate lyase acyl carrier protein</fullName>
    </recommendedName>
    <alternativeName>
        <fullName evidence="1">Citrate lyase gamma chain</fullName>
    </alternativeName>
</protein>
<reference key="1">
    <citation type="journal article" date="2002" name="Proc. Natl. Acad. Sci. U.S.A.">
        <title>Complete genome sequence of Clostridium perfringens, an anaerobic flesh-eater.</title>
        <authorList>
            <person name="Shimizu T."/>
            <person name="Ohtani K."/>
            <person name="Hirakawa H."/>
            <person name="Ohshima K."/>
            <person name="Yamashita A."/>
            <person name="Shiba T."/>
            <person name="Ogasawara N."/>
            <person name="Hattori M."/>
            <person name="Kuhara S."/>
            <person name="Hayashi H."/>
        </authorList>
    </citation>
    <scope>NUCLEOTIDE SEQUENCE [LARGE SCALE GENOMIC DNA]</scope>
    <source>
        <strain>13 / Type A</strain>
    </source>
</reference>
<keyword id="KW-0963">Cytoplasm</keyword>
<keyword id="KW-0597">Phosphoprotein</keyword>
<keyword id="KW-1185">Reference proteome</keyword>
<sequence>MEIKKPALAGTLESSDCIVSVEPSMDNTIEINLTSTVKKQFGNEIIKVAKETLKNLGVNSVVMEINDKGALNCVIEARIEAAVCRASEINEFDWGNYKCQD</sequence>
<proteinExistence type="inferred from homology"/>
<name>CITD_CLOPE</name>
<gene>
    <name evidence="1" type="primary">citD</name>
    <name type="ordered locus">CPE1147</name>
</gene>
<evidence type="ECO:0000255" key="1">
    <source>
        <dbReference type="HAMAP-Rule" id="MF_00805"/>
    </source>
</evidence>